<sequence>MDNRGEFLNNVAQALGRPLRLEPQAEDAPLNNYANERLTQLNQQQRCDAFIQFASDVMLTRCELTSEAKAAEAAIRLCKELGDQSVVISGDTRLEELGISERLQQECNAVVWDPAKGAENISQAEQAKVGVVYAEYGLTESGGVVLFSAAERGRSLSLLPEYSLFILRKSTILPRVAQLAEKLHQKAQAGERMPSCINIISGPSSTADIELIKVVGVHGPVKAVYLIIEDC</sequence>
<dbReference type="EMBL" id="U73857">
    <property type="protein sequence ID" value="AAB18035.1"/>
    <property type="status" value="ALT_INIT"/>
    <property type="molecule type" value="Genomic_DNA"/>
</dbReference>
<dbReference type="EMBL" id="U00096">
    <property type="protein sequence ID" value="AAC73411.2"/>
    <property type="molecule type" value="Genomic_DNA"/>
</dbReference>
<dbReference type="EMBL" id="AP009048">
    <property type="protein sequence ID" value="BAE76092.1"/>
    <property type="molecule type" value="Genomic_DNA"/>
</dbReference>
<dbReference type="PIR" id="D64757">
    <property type="entry name" value="D64757"/>
</dbReference>
<dbReference type="RefSeq" id="NP_414842.4">
    <property type="nucleotide sequence ID" value="NC_000913.3"/>
</dbReference>
<dbReference type="RefSeq" id="WP_000370307.1">
    <property type="nucleotide sequence ID" value="NZ_SSZK01000067.1"/>
</dbReference>
<dbReference type="SMR" id="P77433"/>
<dbReference type="BioGRID" id="4261523">
    <property type="interactions" value="27"/>
</dbReference>
<dbReference type="FunCoup" id="P77433">
    <property type="interactions" value="31"/>
</dbReference>
<dbReference type="STRING" id="511145.b0308"/>
<dbReference type="jPOST" id="P77433"/>
<dbReference type="PaxDb" id="511145-b0308"/>
<dbReference type="EnsemblBacteria" id="AAC73411">
    <property type="protein sequence ID" value="AAC73411"/>
    <property type="gene ID" value="b0308"/>
</dbReference>
<dbReference type="GeneID" id="945906"/>
<dbReference type="KEGG" id="ecj:JW5042"/>
<dbReference type="KEGG" id="eco:b0308"/>
<dbReference type="KEGG" id="ecoc:C3026_01510"/>
<dbReference type="KEGG" id="ecoc:C3026_24685"/>
<dbReference type="PATRIC" id="fig|511145.12.peg.316"/>
<dbReference type="EchoBASE" id="EB3354"/>
<dbReference type="eggNOG" id="COG1556">
    <property type="taxonomic scope" value="Bacteria"/>
</dbReference>
<dbReference type="HOGENOM" id="CLU_090664_1_0_6"/>
<dbReference type="InParanoid" id="P77433"/>
<dbReference type="OMA" id="MPSCVNI"/>
<dbReference type="OrthoDB" id="9794157at2"/>
<dbReference type="PhylomeDB" id="P77433"/>
<dbReference type="BioCyc" id="EcoCyc:G6178-MONOMER"/>
<dbReference type="PRO" id="PR:P77433"/>
<dbReference type="Proteomes" id="UP000000625">
    <property type="component" value="Chromosome"/>
</dbReference>
<dbReference type="GO" id="GO:0005829">
    <property type="term" value="C:cytosol"/>
    <property type="evidence" value="ECO:0000314"/>
    <property type="project" value="EcoCyc"/>
</dbReference>
<dbReference type="GO" id="GO:0004459">
    <property type="term" value="F:L-lactate dehydrogenase activity"/>
    <property type="evidence" value="ECO:0000269"/>
    <property type="project" value="EcoCyc"/>
</dbReference>
<dbReference type="FunFam" id="3.40.50.10420:FF:000006">
    <property type="entry name" value="Lactate utilization protein C"/>
    <property type="match status" value="1"/>
</dbReference>
<dbReference type="Gene3D" id="3.40.50.10420">
    <property type="entry name" value="NagB/RpiA/CoA transferase-like"/>
    <property type="match status" value="1"/>
</dbReference>
<dbReference type="InterPro" id="IPR024185">
    <property type="entry name" value="FTHF_cligase-like_sf"/>
</dbReference>
<dbReference type="InterPro" id="IPR003741">
    <property type="entry name" value="LUD_dom"/>
</dbReference>
<dbReference type="InterPro" id="IPR037171">
    <property type="entry name" value="NagB/RpiA_transferase-like"/>
</dbReference>
<dbReference type="PANTHER" id="PTHR43682">
    <property type="entry name" value="LACTATE UTILIZATION PROTEIN C"/>
    <property type="match status" value="1"/>
</dbReference>
<dbReference type="PANTHER" id="PTHR43682:SF1">
    <property type="entry name" value="LACTATE UTILIZATION PROTEIN C"/>
    <property type="match status" value="1"/>
</dbReference>
<dbReference type="Pfam" id="PF02589">
    <property type="entry name" value="LUD_dom"/>
    <property type="match status" value="1"/>
</dbReference>
<dbReference type="SUPFAM" id="SSF100950">
    <property type="entry name" value="NagB/RpiA/CoA transferase-like"/>
    <property type="match status" value="1"/>
</dbReference>
<reference key="1">
    <citation type="submission" date="1997-01" db="EMBL/GenBank/DDBJ databases">
        <title>Sequence of minutes 4-25 of Escherichia coli.</title>
        <authorList>
            <person name="Chung E."/>
            <person name="Allen E."/>
            <person name="Araujo R."/>
            <person name="Aparicio A.M."/>
            <person name="Davis K."/>
            <person name="Duncan M."/>
            <person name="Federspiel N."/>
            <person name="Hyman R."/>
            <person name="Kalman S."/>
            <person name="Komp C."/>
            <person name="Kurdi O."/>
            <person name="Lew H."/>
            <person name="Lin D."/>
            <person name="Namath A."/>
            <person name="Oefner P."/>
            <person name="Roberts D."/>
            <person name="Schramm S."/>
            <person name="Davis R.W."/>
        </authorList>
    </citation>
    <scope>NUCLEOTIDE SEQUENCE [LARGE SCALE GENOMIC DNA]</scope>
    <source>
        <strain>K12 / MG1655 / ATCC 47076</strain>
    </source>
</reference>
<reference key="2">
    <citation type="journal article" date="1997" name="Science">
        <title>The complete genome sequence of Escherichia coli K-12.</title>
        <authorList>
            <person name="Blattner F.R."/>
            <person name="Plunkett G. III"/>
            <person name="Bloch C.A."/>
            <person name="Perna N.T."/>
            <person name="Burland V."/>
            <person name="Riley M."/>
            <person name="Collado-Vides J."/>
            <person name="Glasner J.D."/>
            <person name="Rode C.K."/>
            <person name="Mayhew G.F."/>
            <person name="Gregor J."/>
            <person name="Davis N.W."/>
            <person name="Kirkpatrick H.A."/>
            <person name="Goeden M.A."/>
            <person name="Rose D.J."/>
            <person name="Mau B."/>
            <person name="Shao Y."/>
        </authorList>
    </citation>
    <scope>NUCLEOTIDE SEQUENCE [LARGE SCALE GENOMIC DNA]</scope>
    <source>
        <strain>K12 / MG1655 / ATCC 47076</strain>
    </source>
</reference>
<reference key="3">
    <citation type="journal article" date="2006" name="Mol. Syst. Biol.">
        <title>Highly accurate genome sequences of Escherichia coli K-12 strains MG1655 and W3110.</title>
        <authorList>
            <person name="Hayashi K."/>
            <person name="Morooka N."/>
            <person name="Yamamoto Y."/>
            <person name="Fujita K."/>
            <person name="Isono K."/>
            <person name="Choi S."/>
            <person name="Ohtsubo E."/>
            <person name="Baba T."/>
            <person name="Wanner B.L."/>
            <person name="Mori H."/>
            <person name="Horiuchi T."/>
        </authorList>
    </citation>
    <scope>NUCLEOTIDE SEQUENCE [LARGE SCALE GENOMIC DNA]</scope>
    <source>
        <strain>K12 / W3110 / ATCC 27325 / DSM 5911</strain>
    </source>
</reference>
<reference key="4">
    <citation type="journal article" date="2009" name="J. Bacteriol.">
        <title>A widely conserved gene cluster required for lactate utilization in Bacillus subtilis and its involvement in biofilm formation.</title>
        <authorList>
            <person name="Chai Y."/>
            <person name="Kolter R."/>
            <person name="Losick R."/>
        </authorList>
    </citation>
    <scope>LACK OF COMPLEMENTATION OF B.SUBTILIS LUTABC OPERON</scope>
    <source>
        <strain>K12</strain>
    </source>
</reference>
<protein>
    <recommendedName>
        <fullName>Uncharacterized protein YkgG</fullName>
    </recommendedName>
</protein>
<name>YKGG_ECOLI</name>
<organism>
    <name type="scientific">Escherichia coli (strain K12)</name>
    <dbReference type="NCBI Taxonomy" id="83333"/>
    <lineage>
        <taxon>Bacteria</taxon>
        <taxon>Pseudomonadati</taxon>
        <taxon>Pseudomonadota</taxon>
        <taxon>Gammaproteobacteria</taxon>
        <taxon>Enterobacterales</taxon>
        <taxon>Enterobacteriaceae</taxon>
        <taxon>Escherichia</taxon>
    </lineage>
</organism>
<comment type="miscellaneous">
    <text>The E.coli ykgEFG operon is a clear homolog of the B.subtilis lutABC operon, however it is not able of restoring L-lactate utilization to the B.subtilis mutant for lutABC operon. Thus, ykgEFG operon may contribute to lactate catabolism in E.coli, but under conditions other than those tested, or alternatively, the ykgEFG operon may be responsible for the catabolism of a metabolite other than (but perhaps related to) lactate in E.coli.</text>
</comment>
<comment type="similarity">
    <text evidence="1">Belongs to the LutC/YkgG family.</text>
</comment>
<comment type="sequence caution" evidence="1">
    <conflict type="erroneous initiation">
        <sequence resource="EMBL-CDS" id="AAB18035"/>
    </conflict>
    <text>Extended N-terminus.</text>
</comment>
<gene>
    <name type="primary">ykgG</name>
    <name type="ordered locus">b0308</name>
    <name type="ordered locus">JW5042</name>
</gene>
<accession>P77433</accession>
<accession>Q2MCB4</accession>
<proteinExistence type="inferred from homology"/>
<keyword id="KW-1185">Reference proteome</keyword>
<evidence type="ECO:0000305" key="1"/>
<feature type="chain" id="PRO_0000168570" description="Uncharacterized protein YkgG">
    <location>
        <begin position="1"/>
        <end position="231"/>
    </location>
</feature>